<gene>
    <name evidence="1" type="primary">dapD</name>
    <name type="ordered locus">HI_1634</name>
</gene>
<name>DAPD_HAEIN</name>
<reference key="1">
    <citation type="journal article" date="1995" name="Science">
        <title>Whole-genome random sequencing and assembly of Haemophilus influenzae Rd.</title>
        <authorList>
            <person name="Fleischmann R.D."/>
            <person name="Adams M.D."/>
            <person name="White O."/>
            <person name="Clayton R.A."/>
            <person name="Kirkness E.F."/>
            <person name="Kerlavage A.R."/>
            <person name="Bult C.J."/>
            <person name="Tomb J.-F."/>
            <person name="Dougherty B.A."/>
            <person name="Merrick J.M."/>
            <person name="McKenney K."/>
            <person name="Sutton G.G."/>
            <person name="FitzHugh W."/>
            <person name="Fields C.A."/>
            <person name="Gocayne J.D."/>
            <person name="Scott J.D."/>
            <person name="Shirley R."/>
            <person name="Liu L.-I."/>
            <person name="Glodek A."/>
            <person name="Kelley J.M."/>
            <person name="Weidman J.F."/>
            <person name="Phillips C.A."/>
            <person name="Spriggs T."/>
            <person name="Hedblom E."/>
            <person name="Cotton M.D."/>
            <person name="Utterback T.R."/>
            <person name="Hanna M.C."/>
            <person name="Nguyen D.T."/>
            <person name="Saudek D.M."/>
            <person name="Brandon R.C."/>
            <person name="Fine L.D."/>
            <person name="Fritchman J.L."/>
            <person name="Fuhrmann J.L."/>
            <person name="Geoghagen N.S.M."/>
            <person name="Gnehm C.L."/>
            <person name="McDonald L.A."/>
            <person name="Small K.V."/>
            <person name="Fraser C.M."/>
            <person name="Smith H.O."/>
            <person name="Venter J.C."/>
        </authorList>
    </citation>
    <scope>NUCLEOTIDE SEQUENCE [LARGE SCALE GENOMIC DNA]</scope>
    <source>
        <strain>ATCC 51907 / DSM 11121 / KW20 / Rd</strain>
    </source>
</reference>
<evidence type="ECO:0000255" key="1">
    <source>
        <dbReference type="HAMAP-Rule" id="MF_00811"/>
    </source>
</evidence>
<evidence type="ECO:0000305" key="2"/>
<organism>
    <name type="scientific">Haemophilus influenzae (strain ATCC 51907 / DSM 11121 / KW20 / Rd)</name>
    <dbReference type="NCBI Taxonomy" id="71421"/>
    <lineage>
        <taxon>Bacteria</taxon>
        <taxon>Pseudomonadati</taxon>
        <taxon>Pseudomonadota</taxon>
        <taxon>Gammaproteobacteria</taxon>
        <taxon>Pasteurellales</taxon>
        <taxon>Pasteurellaceae</taxon>
        <taxon>Haemophilus</taxon>
    </lineage>
</organism>
<comment type="catalytic activity">
    <reaction evidence="1">
        <text>(S)-2,3,4,5-tetrahydrodipicolinate + succinyl-CoA + H2O = (S)-2-succinylamino-6-oxoheptanedioate + CoA</text>
        <dbReference type="Rhea" id="RHEA:17325"/>
        <dbReference type="ChEBI" id="CHEBI:15377"/>
        <dbReference type="ChEBI" id="CHEBI:15685"/>
        <dbReference type="ChEBI" id="CHEBI:16845"/>
        <dbReference type="ChEBI" id="CHEBI:57287"/>
        <dbReference type="ChEBI" id="CHEBI:57292"/>
        <dbReference type="EC" id="2.3.1.117"/>
    </reaction>
</comment>
<comment type="pathway">
    <text evidence="1">Amino-acid biosynthesis; L-lysine biosynthesis via DAP pathway; LL-2,6-diaminopimelate from (S)-tetrahydrodipicolinate (succinylase route): step 1/3.</text>
</comment>
<comment type="subunit">
    <text evidence="1">Homotrimer.</text>
</comment>
<comment type="subcellular location">
    <subcellularLocation>
        <location evidence="1">Cytoplasm</location>
    </subcellularLocation>
</comment>
<comment type="similarity">
    <text evidence="1">Belongs to the transferase hexapeptide repeat family.</text>
</comment>
<comment type="sequence caution" evidence="2">
    <conflict type="erroneous initiation">
        <sequence resource="EMBL-CDS" id="AAC23279"/>
    </conflict>
</comment>
<protein>
    <recommendedName>
        <fullName evidence="1">2,3,4,5-tetrahydropyridine-2,6-dicarboxylate N-succinyltransferase</fullName>
        <ecNumber evidence="1">2.3.1.117</ecNumber>
    </recommendedName>
    <alternativeName>
        <fullName evidence="1">Tetrahydrodipicolinate N-succinyltransferase</fullName>
        <shortName evidence="1">THDP succinyltransferase</shortName>
        <shortName evidence="1">THP succinyltransferase</shortName>
        <shortName evidence="1">Tetrahydropicolinate succinylase</shortName>
    </alternativeName>
</protein>
<proteinExistence type="inferred from homology"/>
<accession>P45284</accession>
<dbReference type="EC" id="2.3.1.117" evidence="1"/>
<dbReference type="EMBL" id="L42023">
    <property type="protein sequence ID" value="AAC23279.1"/>
    <property type="status" value="ALT_INIT"/>
    <property type="molecule type" value="Genomic_DNA"/>
</dbReference>
<dbReference type="PIR" id="H64133">
    <property type="entry name" value="H64133"/>
</dbReference>
<dbReference type="RefSeq" id="NP_439776.2">
    <property type="nucleotide sequence ID" value="NC_000907.1"/>
</dbReference>
<dbReference type="SMR" id="P45284"/>
<dbReference type="STRING" id="71421.HI_1634"/>
<dbReference type="EnsemblBacteria" id="AAC23279">
    <property type="protein sequence ID" value="AAC23279"/>
    <property type="gene ID" value="HI_1634"/>
</dbReference>
<dbReference type="KEGG" id="hin:HI_1634"/>
<dbReference type="PATRIC" id="fig|71421.8.peg.1709"/>
<dbReference type="eggNOG" id="COG2171">
    <property type="taxonomic scope" value="Bacteria"/>
</dbReference>
<dbReference type="HOGENOM" id="CLU_050859_0_1_6"/>
<dbReference type="OrthoDB" id="9775362at2"/>
<dbReference type="PhylomeDB" id="P45284"/>
<dbReference type="BioCyc" id="HINF71421:G1GJ1-1651-MONOMER"/>
<dbReference type="UniPathway" id="UPA00034">
    <property type="reaction ID" value="UER00019"/>
</dbReference>
<dbReference type="Proteomes" id="UP000000579">
    <property type="component" value="Chromosome"/>
</dbReference>
<dbReference type="GO" id="GO:0005737">
    <property type="term" value="C:cytoplasm"/>
    <property type="evidence" value="ECO:0007669"/>
    <property type="project" value="UniProtKB-SubCell"/>
</dbReference>
<dbReference type="GO" id="GO:0008666">
    <property type="term" value="F:2,3,4,5-tetrahydropyridine-2,6-dicarboxylate N-succinyltransferase activity"/>
    <property type="evidence" value="ECO:0007669"/>
    <property type="project" value="UniProtKB-UniRule"/>
</dbReference>
<dbReference type="GO" id="GO:0016779">
    <property type="term" value="F:nucleotidyltransferase activity"/>
    <property type="evidence" value="ECO:0000318"/>
    <property type="project" value="GO_Central"/>
</dbReference>
<dbReference type="GO" id="GO:0019877">
    <property type="term" value="P:diaminopimelate biosynthetic process"/>
    <property type="evidence" value="ECO:0000318"/>
    <property type="project" value="GO_Central"/>
</dbReference>
<dbReference type="GO" id="GO:0009085">
    <property type="term" value="P:lysine biosynthetic process"/>
    <property type="evidence" value="ECO:0000318"/>
    <property type="project" value="GO_Central"/>
</dbReference>
<dbReference type="GO" id="GO:0009089">
    <property type="term" value="P:lysine biosynthetic process via diaminopimelate"/>
    <property type="evidence" value="ECO:0007669"/>
    <property type="project" value="UniProtKB-UniRule"/>
</dbReference>
<dbReference type="CDD" id="cd03350">
    <property type="entry name" value="LbH_THP_succinylT"/>
    <property type="match status" value="1"/>
</dbReference>
<dbReference type="Gene3D" id="2.160.10.10">
    <property type="entry name" value="Hexapeptide repeat proteins"/>
    <property type="match status" value="1"/>
</dbReference>
<dbReference type="Gene3D" id="1.10.166.10">
    <property type="entry name" value="Tetrahydrodipicolinate-N-succinyltransferase, N-terminal domain"/>
    <property type="match status" value="1"/>
</dbReference>
<dbReference type="HAMAP" id="MF_00811">
    <property type="entry name" value="DapD"/>
    <property type="match status" value="1"/>
</dbReference>
<dbReference type="InterPro" id="IPR005664">
    <property type="entry name" value="DapD_Trfase_Hexpep_rpt_fam"/>
</dbReference>
<dbReference type="InterPro" id="IPR001451">
    <property type="entry name" value="Hexapep"/>
</dbReference>
<dbReference type="InterPro" id="IPR018357">
    <property type="entry name" value="Hexapep_transf_CS"/>
</dbReference>
<dbReference type="InterPro" id="IPR023180">
    <property type="entry name" value="THP_succinylTrfase_dom1"/>
</dbReference>
<dbReference type="InterPro" id="IPR037133">
    <property type="entry name" value="THP_succinylTrfase_N_sf"/>
</dbReference>
<dbReference type="InterPro" id="IPR011004">
    <property type="entry name" value="Trimer_LpxA-like_sf"/>
</dbReference>
<dbReference type="NCBIfam" id="TIGR00965">
    <property type="entry name" value="dapD"/>
    <property type="match status" value="1"/>
</dbReference>
<dbReference type="NCBIfam" id="NF008808">
    <property type="entry name" value="PRK11830.1"/>
    <property type="match status" value="1"/>
</dbReference>
<dbReference type="PANTHER" id="PTHR19136:SF52">
    <property type="entry name" value="2,3,4,5-TETRAHYDROPYRIDINE-2,6-DICARBOXYLATE N-SUCCINYLTRANSFERASE"/>
    <property type="match status" value="1"/>
</dbReference>
<dbReference type="PANTHER" id="PTHR19136">
    <property type="entry name" value="MOLYBDENUM COFACTOR GUANYLYLTRANSFERASE"/>
    <property type="match status" value="1"/>
</dbReference>
<dbReference type="Pfam" id="PF14602">
    <property type="entry name" value="Hexapep_2"/>
    <property type="match status" value="1"/>
</dbReference>
<dbReference type="Pfam" id="PF14805">
    <property type="entry name" value="THDPS_N_2"/>
    <property type="match status" value="1"/>
</dbReference>
<dbReference type="SUPFAM" id="SSF51161">
    <property type="entry name" value="Trimeric LpxA-like enzymes"/>
    <property type="match status" value="1"/>
</dbReference>
<dbReference type="PROSITE" id="PS00101">
    <property type="entry name" value="HEXAPEP_TRANSFERASES"/>
    <property type="match status" value="1"/>
</dbReference>
<feature type="chain" id="PRO_0000196940" description="2,3,4,5-tetrahydropyridine-2,6-dicarboxylate N-succinyltransferase">
    <location>
        <begin position="1"/>
        <end position="275"/>
    </location>
</feature>
<feature type="binding site" evidence="1">
    <location>
        <position position="104"/>
    </location>
    <ligand>
        <name>substrate</name>
    </ligand>
</feature>
<feature type="binding site" evidence="1">
    <location>
        <position position="141"/>
    </location>
    <ligand>
        <name>substrate</name>
    </ligand>
</feature>
<sequence>MSNLQAIIEAAFEKRAEITPKTVDAETRAAIEEVIEGLDSGKYRVAEKIAGEWVTHQWLKKAVLLSFRINDNQIIDGAETKYYDKVALKFADYTEERFTEEGFRVVPSATVRKGAYISKNCVLMPSYVNIGAYVGEGTMVDTWATVGSCAQIGKNVHLSGGVGIGGVLEPLQANPTIIGDNCFIGARSEVVEGVIVEDGCVISMGVFIGQSTKIYDRETGEIHYGRVPAGSVVVSGSLPSKCGKYSLYCAVIVKKVDAKTLGKVGINELLRSIEE</sequence>
<keyword id="KW-0012">Acyltransferase</keyword>
<keyword id="KW-0028">Amino-acid biosynthesis</keyword>
<keyword id="KW-0963">Cytoplasm</keyword>
<keyword id="KW-0220">Diaminopimelate biosynthesis</keyword>
<keyword id="KW-0457">Lysine biosynthesis</keyword>
<keyword id="KW-1185">Reference proteome</keyword>
<keyword id="KW-0677">Repeat</keyword>
<keyword id="KW-0808">Transferase</keyword>